<proteinExistence type="evidence at transcript level"/>
<sequence length="533" mass="59831">MSNLLRVAVSKQKRRYQKNGYDLDLAYITDNIVAMGFPSEKVEGVFRNPMKDVQRFLDQYHKDHFKVYNLCSERVYDHSKFYGRVGYYPFDDHNAPQFEMIDAFCRDVDAWMKEDSKNIAVIHCKAGKGRTGLMICCWLMYCGMWKNTEDSLRFYAALRTYNQKGVTIPSQIRYVGYFGRSIRESIKYVPRNVTLKKIVLRPLPKEINLSEVQFNISVGKNCVFNSKEHNMNVVISKKKKTVVDKNKKDPKKKLTKENSEKNIDSQQQQQSQSSLSQSQQGQSSPNMQSLSASGTISSGSNVGTVNGNTLHQLGGSQFSLSDLADGNTIGNDEYISFEIGALSLAGDIRIEFTNKQDDRMFMFWVNTSFVQQLEIIPKSGLDKAHKDKNHKAFPEDFHVELTFDQLDQQQSHTTVVASAEEQTNNQHYPQSSNNVATSSSHHDNITVVASDAPQNNNNNNNLNSSNSNNATTTTTKNNISLASSQSNPVQQESNPSTTTQVSEENSAPKVEAEKIENSNASANDSETSSNSSS</sequence>
<reference key="1">
    <citation type="submission" date="2002-01" db="EMBL/GenBank/DDBJ databases">
        <title>Spatial and temporal regulation of Dictyostelium discoideum chemotaxis by PTEN.</title>
        <authorList>
            <person name="Meili R."/>
            <person name="Firtel R.A."/>
        </authorList>
    </citation>
    <scope>NUCLEOTIDE SEQUENCE [MRNA]</scope>
    <source>
        <strain>AX3</strain>
    </source>
</reference>
<reference key="2">
    <citation type="submission" date="2002-02" db="EMBL/GenBank/DDBJ databases">
        <title>Dictyostelium discoideum PI3 phosphatase PTEN homolog.</title>
        <authorList>
            <person name="Iijima M."/>
            <person name="Devreotes P.N."/>
        </authorList>
    </citation>
    <scope>NUCLEOTIDE SEQUENCE [MRNA] OF 1-515</scope>
</reference>
<reference key="3">
    <citation type="journal article" date="2005" name="Nature">
        <title>The genome of the social amoeba Dictyostelium discoideum.</title>
        <authorList>
            <person name="Eichinger L."/>
            <person name="Pachebat J.A."/>
            <person name="Gloeckner G."/>
            <person name="Rajandream M.A."/>
            <person name="Sucgang R."/>
            <person name="Berriman M."/>
            <person name="Song J."/>
            <person name="Olsen R."/>
            <person name="Szafranski K."/>
            <person name="Xu Q."/>
            <person name="Tunggal B."/>
            <person name="Kummerfeld S."/>
            <person name="Madera M."/>
            <person name="Konfortov B.A."/>
            <person name="Rivero F."/>
            <person name="Bankier A.T."/>
            <person name="Lehmann R."/>
            <person name="Hamlin N."/>
            <person name="Davies R."/>
            <person name="Gaudet P."/>
            <person name="Fey P."/>
            <person name="Pilcher K."/>
            <person name="Chen G."/>
            <person name="Saunders D."/>
            <person name="Sodergren E.J."/>
            <person name="Davis P."/>
            <person name="Kerhornou A."/>
            <person name="Nie X."/>
            <person name="Hall N."/>
            <person name="Anjard C."/>
            <person name="Hemphill L."/>
            <person name="Bason N."/>
            <person name="Farbrother P."/>
            <person name="Desany B."/>
            <person name="Just E."/>
            <person name="Morio T."/>
            <person name="Rost R."/>
            <person name="Churcher C.M."/>
            <person name="Cooper J."/>
            <person name="Haydock S."/>
            <person name="van Driessche N."/>
            <person name="Cronin A."/>
            <person name="Goodhead I."/>
            <person name="Muzny D.M."/>
            <person name="Mourier T."/>
            <person name="Pain A."/>
            <person name="Lu M."/>
            <person name="Harper D."/>
            <person name="Lindsay R."/>
            <person name="Hauser H."/>
            <person name="James K.D."/>
            <person name="Quiles M."/>
            <person name="Madan Babu M."/>
            <person name="Saito T."/>
            <person name="Buchrieser C."/>
            <person name="Wardroper A."/>
            <person name="Felder M."/>
            <person name="Thangavelu M."/>
            <person name="Johnson D."/>
            <person name="Knights A."/>
            <person name="Loulseged H."/>
            <person name="Mungall K.L."/>
            <person name="Oliver K."/>
            <person name="Price C."/>
            <person name="Quail M.A."/>
            <person name="Urushihara H."/>
            <person name="Hernandez J."/>
            <person name="Rabbinowitsch E."/>
            <person name="Steffen D."/>
            <person name="Sanders M."/>
            <person name="Ma J."/>
            <person name="Kohara Y."/>
            <person name="Sharp S."/>
            <person name="Simmonds M.N."/>
            <person name="Spiegler S."/>
            <person name="Tivey A."/>
            <person name="Sugano S."/>
            <person name="White B."/>
            <person name="Walker D."/>
            <person name="Woodward J.R."/>
            <person name="Winckler T."/>
            <person name="Tanaka Y."/>
            <person name="Shaulsky G."/>
            <person name="Schleicher M."/>
            <person name="Weinstock G.M."/>
            <person name="Rosenthal A."/>
            <person name="Cox E.C."/>
            <person name="Chisholm R.L."/>
            <person name="Gibbs R.A."/>
            <person name="Loomis W.F."/>
            <person name="Platzer M."/>
            <person name="Kay R.R."/>
            <person name="Williams J.G."/>
            <person name="Dear P.H."/>
            <person name="Noegel A.A."/>
            <person name="Barrell B.G."/>
            <person name="Kuspa A."/>
        </authorList>
    </citation>
    <scope>NUCLEOTIDE SEQUENCE [LARGE SCALE GENOMIC DNA]</scope>
    <source>
        <strain>AX4</strain>
    </source>
</reference>
<reference key="4">
    <citation type="journal article" date="2002" name="Cell">
        <title>Tumor suppressor PTEN mediates sensing of chemoattractant gradients.</title>
        <authorList>
            <person name="Iijima M."/>
            <person name="Devreotes P."/>
        </authorList>
    </citation>
    <scope>DISRUPTION PHENOTYPE</scope>
    <scope>SUBCELLULAR LOCATION</scope>
    <scope>FUNCTION</scope>
</reference>
<reference key="5">
    <citation type="journal article" date="2002" name="Cell">
        <title>Spatial and temporal regulation of 3-phosphoinositides by PI 3-kinase and PTEN mediates chemotaxis.</title>
        <authorList>
            <person name="Funamoto S."/>
            <person name="Meili R."/>
            <person name="Lee S."/>
            <person name="Parry L."/>
            <person name="Firtel R.A."/>
        </authorList>
    </citation>
    <scope>DISRUPTION PHENOTYPE</scope>
    <scope>FUNCTION</scope>
    <scope>SUBCELLULAR LOCATION</scope>
    <scope>DEVELOPMENTAL STAGE</scope>
</reference>
<reference key="6">
    <citation type="journal article" date="2007" name="Dev. Cell">
        <title>PLA2 and PI3K/PTEN pathways act in parallel to mediate chemotaxis.</title>
        <authorList>
            <person name="Chen L."/>
            <person name="Iijima M."/>
            <person name="Tang M."/>
            <person name="Landree M.A."/>
            <person name="Huang Y.E."/>
            <person name="Xiong Y."/>
            <person name="Iglesias P.A."/>
            <person name="Devreotes P.N."/>
        </authorList>
    </citation>
    <scope>FUNCTION</scope>
</reference>
<reference key="7">
    <citation type="journal article" date="2007" name="J. Cell Sci.">
        <title>PTEN plays a role in the suppression of lateral pseudopod formation during Dictyostelium motility and chemotaxis.</title>
        <authorList>
            <person name="Wessels D."/>
            <person name="Lusche D.F."/>
            <person name="Kuhl S."/>
            <person name="Heid P."/>
            <person name="Soll D.R."/>
        </authorList>
    </citation>
    <scope>FUNCTION</scope>
    <scope>DISRUPTION PHENOTYPE</scope>
</reference>
<reference key="8">
    <citation type="journal article" date="2008" name="Ageing Res. Rev.">
        <title>Oscillatory signaling and network responses during the development of Dictyostelium discoideum.</title>
        <authorList>
            <person name="McMains V.C."/>
            <person name="Liao X.-H."/>
            <person name="Kimmel A.R."/>
        </authorList>
    </citation>
    <scope>DISRUPTION PHENOTYPE</scope>
    <scope>FUNCTION</scope>
</reference>
<reference key="9">
    <citation type="journal article" date="2008" name="Biophys. J.">
        <title>3'-phosphoinositides regulate the coordination of speed and accuracy during chemotaxis.</title>
        <authorList>
            <person name="Gruver J.S."/>
            <person name="Wikswo J.P."/>
            <person name="Chung C.Y."/>
        </authorList>
    </citation>
    <scope>FUNCTION</scope>
</reference>
<reference key="10">
    <citation type="journal article" date="2008" name="PLoS ONE">
        <title>Ordered patterns of cell shape and orientational correlation during spontaneous cell migration.</title>
        <authorList>
            <person name="Maeda Y.T."/>
            <person name="Inose J."/>
            <person name="Matsuo M.Y."/>
            <person name="Iwaya S."/>
            <person name="Sano M."/>
        </authorList>
    </citation>
    <scope>DISRUPTION PHENOTYPE</scope>
    <scope>FUNCTION</scope>
</reference>
<evidence type="ECO:0000250" key="1">
    <source>
        <dbReference type="UniProtKB" id="P60484"/>
    </source>
</evidence>
<evidence type="ECO:0000255" key="2">
    <source>
        <dbReference type="PROSITE-ProRule" id="PRU00589"/>
    </source>
</evidence>
<evidence type="ECO:0000255" key="3">
    <source>
        <dbReference type="PROSITE-ProRule" id="PRU00590"/>
    </source>
</evidence>
<evidence type="ECO:0000255" key="4">
    <source>
        <dbReference type="PROSITE-ProRule" id="PRU10044"/>
    </source>
</evidence>
<evidence type="ECO:0000256" key="5">
    <source>
        <dbReference type="SAM" id="MobiDB-lite"/>
    </source>
</evidence>
<evidence type="ECO:0000269" key="6">
    <source>
    </source>
</evidence>
<evidence type="ECO:0000269" key="7">
    <source>
    </source>
</evidence>
<evidence type="ECO:0000269" key="8">
    <source>
    </source>
</evidence>
<evidence type="ECO:0000269" key="9">
    <source>
    </source>
</evidence>
<evidence type="ECO:0000269" key="10">
    <source>
    </source>
</evidence>
<evidence type="ECO:0000269" key="11">
    <source>
    </source>
</evidence>
<evidence type="ECO:0000269" key="12">
    <source>
    </source>
</evidence>
<evidence type="ECO:0000305" key="13"/>
<protein>
    <recommendedName>
        <fullName evidence="1">Phosphatidylinositol 3,4,5-trisphosphate 3-phosphatase and dual-specificity protein phosphatase PTEN</fullName>
        <ecNumber evidence="1">3.1.3.16</ecNumber>
        <ecNumber evidence="1">3.1.3.48</ecNumber>
        <ecNumber evidence="1">3.1.3.67</ecNumber>
    </recommendedName>
    <alternativeName>
        <fullName evidence="1">Inositol polyphosphate 3-phosphatase</fullName>
        <ecNumber evidence="1">3.1.3.-</ecNumber>
    </alternativeName>
    <alternativeName>
        <fullName>Pten 3-phosphoinositide phosphatase alpha</fullName>
    </alternativeName>
</protein>
<dbReference type="EC" id="3.1.3.16" evidence="1"/>
<dbReference type="EC" id="3.1.3.48" evidence="1"/>
<dbReference type="EC" id="3.1.3.67" evidence="1"/>
<dbReference type="EC" id="3.1.3.-" evidence="1"/>
<dbReference type="EMBL" id="AF467431">
    <property type="protein sequence ID" value="AAL75566.1"/>
    <property type="molecule type" value="mRNA"/>
</dbReference>
<dbReference type="EMBL" id="AF483827">
    <property type="protein sequence ID" value="AAL99958.1"/>
    <property type="molecule type" value="mRNA"/>
</dbReference>
<dbReference type="EMBL" id="AAFI02000089">
    <property type="protein sequence ID" value="EAL64034.1"/>
    <property type="molecule type" value="Genomic_DNA"/>
</dbReference>
<dbReference type="RefSeq" id="XP_637576.1">
    <property type="nucleotide sequence ID" value="XM_632484.1"/>
</dbReference>
<dbReference type="SMR" id="Q8T9S7"/>
<dbReference type="BioGRID" id="1250719">
    <property type="interactions" value="3"/>
</dbReference>
<dbReference type="FunCoup" id="Q8T9S7">
    <property type="interactions" value="87"/>
</dbReference>
<dbReference type="STRING" id="44689.Q8T9S7"/>
<dbReference type="PaxDb" id="44689-DDB0191093"/>
<dbReference type="EnsemblProtists" id="EAL64034">
    <property type="protein sequence ID" value="EAL64034"/>
    <property type="gene ID" value="DDB_G0286557"/>
</dbReference>
<dbReference type="GeneID" id="8625716"/>
<dbReference type="KEGG" id="ddi:DDB_G0286557"/>
<dbReference type="dictyBase" id="DDB_G0286557">
    <property type="gene designation" value="pten"/>
</dbReference>
<dbReference type="VEuPathDB" id="AmoebaDB:DDB_G0286557"/>
<dbReference type="eggNOG" id="KOG2283">
    <property type="taxonomic scope" value="Eukaryota"/>
</dbReference>
<dbReference type="HOGENOM" id="CLU_020105_5_1_1"/>
<dbReference type="InParanoid" id="Q8T9S7"/>
<dbReference type="OMA" id="YDHSKFY"/>
<dbReference type="PhylomeDB" id="Q8T9S7"/>
<dbReference type="Reactome" id="R-DDI-1660499">
    <property type="pathway name" value="Synthesis of PIPs at the plasma membrane"/>
</dbReference>
<dbReference type="Reactome" id="R-DDI-1660514">
    <property type="pathway name" value="Synthesis of PIPs at the Golgi membrane"/>
</dbReference>
<dbReference type="Reactome" id="R-DDI-1855204">
    <property type="pathway name" value="Synthesis of IP3 and IP4 in the cytosol"/>
</dbReference>
<dbReference type="Reactome" id="R-DDI-199418">
    <property type="pathway name" value="Negative regulation of the PI3K/AKT network"/>
</dbReference>
<dbReference type="Reactome" id="R-DDI-202424">
    <property type="pathway name" value="Downstream TCR signaling"/>
</dbReference>
<dbReference type="Reactome" id="R-DDI-5689880">
    <property type="pathway name" value="Ub-specific processing proteases"/>
</dbReference>
<dbReference type="Reactome" id="R-DDI-5689896">
    <property type="pathway name" value="Ovarian tumor domain proteases"/>
</dbReference>
<dbReference type="Reactome" id="R-DDI-8948747">
    <property type="pathway name" value="Regulation of PTEN localization"/>
</dbReference>
<dbReference type="Reactome" id="R-DDI-8948751">
    <property type="pathway name" value="Regulation of PTEN stability and activity"/>
</dbReference>
<dbReference type="PRO" id="PR:Q8T9S7"/>
<dbReference type="Proteomes" id="UP000002195">
    <property type="component" value="Chromosome 4"/>
</dbReference>
<dbReference type="GO" id="GO:0051285">
    <property type="term" value="C:cell cortex of cell tip"/>
    <property type="evidence" value="ECO:0000314"/>
    <property type="project" value="dictyBase"/>
</dbReference>
<dbReference type="GO" id="GO:0042995">
    <property type="term" value="C:cell projection"/>
    <property type="evidence" value="ECO:0000318"/>
    <property type="project" value="GO_Central"/>
</dbReference>
<dbReference type="GO" id="GO:0031254">
    <property type="term" value="C:cell trailing edge"/>
    <property type="evidence" value="ECO:0000314"/>
    <property type="project" value="dictyBase"/>
</dbReference>
<dbReference type="GO" id="GO:0031257">
    <property type="term" value="C:cell trailing edge membrane"/>
    <property type="evidence" value="ECO:0000314"/>
    <property type="project" value="dictyBase"/>
</dbReference>
<dbReference type="GO" id="GO:0032154">
    <property type="term" value="C:cleavage furrow"/>
    <property type="evidence" value="ECO:0000314"/>
    <property type="project" value="dictyBase"/>
</dbReference>
<dbReference type="GO" id="GO:0005829">
    <property type="term" value="C:cytosol"/>
    <property type="evidence" value="ECO:0000314"/>
    <property type="project" value="dictyBase"/>
</dbReference>
<dbReference type="GO" id="GO:1990753">
    <property type="term" value="C:equatorial cell cortex"/>
    <property type="evidence" value="ECO:0000314"/>
    <property type="project" value="dictyBase"/>
</dbReference>
<dbReference type="GO" id="GO:0005634">
    <property type="term" value="C:nucleus"/>
    <property type="evidence" value="ECO:0000318"/>
    <property type="project" value="GO_Central"/>
</dbReference>
<dbReference type="GO" id="GO:0005886">
    <property type="term" value="C:plasma membrane"/>
    <property type="evidence" value="ECO:0000314"/>
    <property type="project" value="dictyBase"/>
</dbReference>
<dbReference type="GO" id="GO:0001931">
    <property type="term" value="C:uropod"/>
    <property type="evidence" value="ECO:0000314"/>
    <property type="project" value="dictyBase"/>
</dbReference>
<dbReference type="GO" id="GO:0030351">
    <property type="term" value="F:inositol-1,3,4,5,6-pentakisphosphate 3-phosphatase activity"/>
    <property type="evidence" value="ECO:0000250"/>
    <property type="project" value="UniProtKB"/>
</dbReference>
<dbReference type="GO" id="GO:0051717">
    <property type="term" value="F:inositol-1,3,4,5-tetrakisphosphate 3-phosphatase activity"/>
    <property type="evidence" value="ECO:0007669"/>
    <property type="project" value="RHEA"/>
</dbReference>
<dbReference type="GO" id="GO:0016314">
    <property type="term" value="F:phosphatidylinositol-3,4,5-trisphosphate 3-phosphatase activity"/>
    <property type="evidence" value="ECO:0000318"/>
    <property type="project" value="GO_Central"/>
</dbReference>
<dbReference type="GO" id="GO:0034485">
    <property type="term" value="F:phosphatidylinositol-3,4,5-trisphosphate 5-phosphatase activity"/>
    <property type="evidence" value="ECO:0000314"/>
    <property type="project" value="dictyBase"/>
</dbReference>
<dbReference type="GO" id="GO:0051800">
    <property type="term" value="F:phosphatidylinositol-3,4-bisphosphate 3-phosphatase activity"/>
    <property type="evidence" value="ECO:0000314"/>
    <property type="project" value="dictyBase"/>
</dbReference>
<dbReference type="GO" id="GO:0080025">
    <property type="term" value="F:phosphatidylinositol-3,5-bisphosphate binding"/>
    <property type="evidence" value="ECO:0000314"/>
    <property type="project" value="dictyBase"/>
</dbReference>
<dbReference type="GO" id="GO:0005546">
    <property type="term" value="F:phosphatidylinositol-4,5-bisphosphate binding"/>
    <property type="evidence" value="ECO:0000314"/>
    <property type="project" value="dictyBase"/>
</dbReference>
<dbReference type="GO" id="GO:0004722">
    <property type="term" value="F:protein serine/threonine phosphatase activity"/>
    <property type="evidence" value="ECO:0007669"/>
    <property type="project" value="UniProtKB-EC"/>
</dbReference>
<dbReference type="GO" id="GO:0004725">
    <property type="term" value="F:protein tyrosine phosphatase activity"/>
    <property type="evidence" value="ECO:0000318"/>
    <property type="project" value="GO_Central"/>
</dbReference>
<dbReference type="GO" id="GO:0030041">
    <property type="term" value="P:actin filament polymerization"/>
    <property type="evidence" value="ECO:0000315"/>
    <property type="project" value="dictyBase"/>
</dbReference>
<dbReference type="GO" id="GO:0007188">
    <property type="term" value="P:adenylate cyclase-modulating G protein-coupled receptor signaling pathway"/>
    <property type="evidence" value="ECO:0000314"/>
    <property type="project" value="dictyBase"/>
</dbReference>
<dbReference type="GO" id="GO:0031152">
    <property type="term" value="P:aggregation involved in sorocarp development"/>
    <property type="evidence" value="ECO:0000315"/>
    <property type="project" value="dictyBase"/>
</dbReference>
<dbReference type="GO" id="GO:0032060">
    <property type="term" value="P:bleb assembly"/>
    <property type="evidence" value="ECO:0000315"/>
    <property type="project" value="dictyBase"/>
</dbReference>
<dbReference type="GO" id="GO:0048870">
    <property type="term" value="P:cell motility"/>
    <property type="evidence" value="ECO:0000315"/>
    <property type="project" value="dictyBase"/>
</dbReference>
<dbReference type="GO" id="GO:0006935">
    <property type="term" value="P:chemotaxis"/>
    <property type="evidence" value="ECO:0000315"/>
    <property type="project" value="dictyBase"/>
</dbReference>
<dbReference type="GO" id="GO:0043327">
    <property type="term" value="P:chemotaxis to cAMP"/>
    <property type="evidence" value="ECO:0000315"/>
    <property type="project" value="dictyBase"/>
</dbReference>
<dbReference type="GO" id="GO:0030010">
    <property type="term" value="P:establishment of cell polarity"/>
    <property type="evidence" value="ECO:0000315"/>
    <property type="project" value="dictyBase"/>
</dbReference>
<dbReference type="GO" id="GO:0140986">
    <property type="term" value="P:G protein-coupled chemorepellent receptor signaling pathway"/>
    <property type="evidence" value="ECO:0000315"/>
    <property type="project" value="dictyBase"/>
</dbReference>
<dbReference type="GO" id="GO:0000281">
    <property type="term" value="P:mitotic cytokinesis"/>
    <property type="evidence" value="ECO:0000315"/>
    <property type="project" value="dictyBase"/>
</dbReference>
<dbReference type="GO" id="GO:0031038">
    <property type="term" value="P:myosin II filament organization"/>
    <property type="evidence" value="ECO:0000315"/>
    <property type="project" value="dictyBase"/>
</dbReference>
<dbReference type="GO" id="GO:0050919">
    <property type="term" value="P:negative chemotaxis"/>
    <property type="evidence" value="ECO:0000315"/>
    <property type="project" value="dictyBase"/>
</dbReference>
<dbReference type="GO" id="GO:1903665">
    <property type="term" value="P:negative regulation of asexual reproduction"/>
    <property type="evidence" value="ECO:0000315"/>
    <property type="project" value="dictyBase"/>
</dbReference>
<dbReference type="GO" id="GO:0051490">
    <property type="term" value="P:negative regulation of filopodium assembly"/>
    <property type="evidence" value="ECO:0000315"/>
    <property type="project" value="dictyBase"/>
</dbReference>
<dbReference type="GO" id="GO:0051898">
    <property type="term" value="P:negative regulation of phosphatidylinositol 3-kinase/protein kinase B signal transduction"/>
    <property type="evidence" value="ECO:0000315"/>
    <property type="project" value="dictyBase"/>
</dbReference>
<dbReference type="GO" id="GO:0031273">
    <property type="term" value="P:negative regulation of pseudopodium assembly"/>
    <property type="evidence" value="ECO:0000315"/>
    <property type="project" value="dictyBase"/>
</dbReference>
<dbReference type="GO" id="GO:0046580">
    <property type="term" value="P:negative regulation of Ras protein signal transduction"/>
    <property type="evidence" value="ECO:0000315"/>
    <property type="project" value="dictyBase"/>
</dbReference>
<dbReference type="GO" id="GO:0043491">
    <property type="term" value="P:phosphatidylinositol 3-kinase/protein kinase B signal transduction"/>
    <property type="evidence" value="ECO:0000315"/>
    <property type="project" value="dictyBase"/>
</dbReference>
<dbReference type="GO" id="GO:0046856">
    <property type="term" value="P:phosphatidylinositol dephosphorylation"/>
    <property type="evidence" value="ECO:0000318"/>
    <property type="project" value="GO_Central"/>
</dbReference>
<dbReference type="GO" id="GO:0036051">
    <property type="term" value="P:protein localization to trailing edge"/>
    <property type="evidence" value="ECO:0000314"/>
    <property type="project" value="dictyBase"/>
</dbReference>
<dbReference type="GO" id="GO:0036052">
    <property type="term" value="P:protein localization to uropod"/>
    <property type="evidence" value="ECO:0000315"/>
    <property type="project" value="dictyBase"/>
</dbReference>
<dbReference type="GO" id="GO:0031269">
    <property type="term" value="P:pseudopodium assembly"/>
    <property type="evidence" value="ECO:0000315"/>
    <property type="project" value="dictyBase"/>
</dbReference>
<dbReference type="GO" id="GO:0022604">
    <property type="term" value="P:regulation of cell morphogenesis"/>
    <property type="evidence" value="ECO:0000315"/>
    <property type="project" value="dictyBase"/>
</dbReference>
<dbReference type="GO" id="GO:0051896">
    <property type="term" value="P:regulation of phosphatidylinositol 3-kinase/protein kinase B signal transduction"/>
    <property type="evidence" value="ECO:0000315"/>
    <property type="project" value="dictyBase"/>
</dbReference>
<dbReference type="GO" id="GO:0031272">
    <property type="term" value="P:regulation of pseudopodium assembly"/>
    <property type="evidence" value="ECO:0000315"/>
    <property type="project" value="dictyBase"/>
</dbReference>
<dbReference type="GO" id="GO:0034461">
    <property type="term" value="P:uropod retraction"/>
    <property type="evidence" value="ECO:0000315"/>
    <property type="project" value="dictyBase"/>
</dbReference>
<dbReference type="CDD" id="cd14509">
    <property type="entry name" value="PTP_PTEN"/>
    <property type="match status" value="1"/>
</dbReference>
<dbReference type="FunFam" id="3.90.190.10:FF:000029">
    <property type="entry name" value="Phosphatidylinositol 3,4,5-trisphosphate 3-phosphatase and dual-specificity protein phosphatase PTEN"/>
    <property type="match status" value="1"/>
</dbReference>
<dbReference type="Gene3D" id="2.60.40.1110">
    <property type="match status" value="1"/>
</dbReference>
<dbReference type="Gene3D" id="3.90.190.10">
    <property type="entry name" value="Protein tyrosine phosphatase superfamily"/>
    <property type="match status" value="1"/>
</dbReference>
<dbReference type="InterPro" id="IPR035892">
    <property type="entry name" value="C2_domain_sf"/>
</dbReference>
<dbReference type="InterPro" id="IPR051281">
    <property type="entry name" value="Dual-spec_lipid-protein_phosph"/>
</dbReference>
<dbReference type="InterPro" id="IPR029021">
    <property type="entry name" value="Prot-tyrosine_phosphatase-like"/>
</dbReference>
<dbReference type="InterPro" id="IPR045101">
    <property type="entry name" value="PTP_PTEN"/>
</dbReference>
<dbReference type="InterPro" id="IPR014020">
    <property type="entry name" value="Tensin_C2-dom"/>
</dbReference>
<dbReference type="InterPro" id="IPR029023">
    <property type="entry name" value="Tensin_phosphatase"/>
</dbReference>
<dbReference type="InterPro" id="IPR016130">
    <property type="entry name" value="Tyr_Pase_AS"/>
</dbReference>
<dbReference type="InterPro" id="IPR000387">
    <property type="entry name" value="Tyr_Pase_dom"/>
</dbReference>
<dbReference type="PANTHER" id="PTHR12305">
    <property type="entry name" value="PHOSPHATASE WITH HOMOLOGY TO TENSIN"/>
    <property type="match status" value="1"/>
</dbReference>
<dbReference type="PANTHER" id="PTHR12305:SF81">
    <property type="entry name" value="PHOSPHATIDYLINOSITOL 3,4,5-TRISPHOSPHATE 3-PHOSPHATASE AND DUAL-SPECIFICITY PROTEIN PHOSPHATASE PTEN"/>
    <property type="match status" value="1"/>
</dbReference>
<dbReference type="Pfam" id="PF10409">
    <property type="entry name" value="PTEN_C2"/>
    <property type="match status" value="1"/>
</dbReference>
<dbReference type="Pfam" id="PF22785">
    <property type="entry name" value="Tc-R-P"/>
    <property type="match status" value="1"/>
</dbReference>
<dbReference type="SMART" id="SM01326">
    <property type="entry name" value="PTEN_C2"/>
    <property type="match status" value="1"/>
</dbReference>
<dbReference type="SMART" id="SM01301">
    <property type="entry name" value="PTPlike_phytase"/>
    <property type="match status" value="1"/>
</dbReference>
<dbReference type="SUPFAM" id="SSF52799">
    <property type="entry name" value="(Phosphotyrosine protein) phosphatases II"/>
    <property type="match status" value="1"/>
</dbReference>
<dbReference type="SUPFAM" id="SSF49562">
    <property type="entry name" value="C2 domain (Calcium/lipid-binding domain, CaLB)"/>
    <property type="match status" value="1"/>
</dbReference>
<dbReference type="PROSITE" id="PS51182">
    <property type="entry name" value="C2_TENSIN"/>
    <property type="match status" value="1"/>
</dbReference>
<dbReference type="PROSITE" id="PS51181">
    <property type="entry name" value="PPASE_TENSIN"/>
    <property type="match status" value="1"/>
</dbReference>
<dbReference type="PROSITE" id="PS00383">
    <property type="entry name" value="TYR_PHOSPHATASE_1"/>
    <property type="match status" value="1"/>
</dbReference>
<dbReference type="PROSITE" id="PS50056">
    <property type="entry name" value="TYR_PHOSPHATASE_2"/>
    <property type="match status" value="1"/>
</dbReference>
<organism>
    <name type="scientific">Dictyostelium discoideum</name>
    <name type="common">Social amoeba</name>
    <dbReference type="NCBI Taxonomy" id="44689"/>
    <lineage>
        <taxon>Eukaryota</taxon>
        <taxon>Amoebozoa</taxon>
        <taxon>Evosea</taxon>
        <taxon>Eumycetozoa</taxon>
        <taxon>Dictyostelia</taxon>
        <taxon>Dictyosteliales</taxon>
        <taxon>Dictyosteliaceae</taxon>
        <taxon>Dictyostelium</taxon>
    </lineage>
</organism>
<comment type="function">
    <text evidence="1 6 7 8 9 10 11 12">Dual-specificity protein phosphatase, dephosphorylating tyrosine-, serine- and threonine-phosphorylated proteins. Also functions as a lipid phosphatase, removing the phosphate in the D3 position of the inositol ring of PtdIns(3,4,5)P3/phosphatidylinositol 3,4,5-trisphosphate, PtdIns(3,4)P2/phosphatidylinositol 3,4-diphosphate and PtdIns3P/phosphatidylinositol 3-phosphate with a preference for PtdIns(3,4,5)P3. Furthermore, this enzyme can also act as a cytosolic inositol 3-phosphatase acting on Ins(1,3,4,5,6)P5/inositol 1,3,4,5,6 pentakisphosphate and possibly Ins(1,3,4,5)P4/1D-myo-inositol 1,3,4,5-tetrakisphosphate (By similarity). Negative regulator of PI3K chemotaxis pathways. Overexpression leads to a suppression of a PI3K-dependent activation of pkbA, and these cells exhibit chemotaxis defects consistent with a reduction in PI3K activity.</text>
</comment>
<comment type="catalytic activity">
    <reaction evidence="1">
        <text>a 1,2-diacyl-sn-glycero-3-phospho-(1D-myo-inositol-3,4,5-trisphosphate) + H2O = a 1,2-diacyl-sn-glycero-3-phospho-(1D-myo-inositol-4,5-bisphosphate) + phosphate</text>
        <dbReference type="Rhea" id="RHEA:25017"/>
        <dbReference type="ChEBI" id="CHEBI:15377"/>
        <dbReference type="ChEBI" id="CHEBI:43474"/>
        <dbReference type="ChEBI" id="CHEBI:57836"/>
        <dbReference type="ChEBI" id="CHEBI:58456"/>
        <dbReference type="EC" id="3.1.3.67"/>
    </reaction>
    <physiologicalReaction direction="left-to-right" evidence="1">
        <dbReference type="Rhea" id="RHEA:25018"/>
    </physiologicalReaction>
</comment>
<comment type="catalytic activity">
    <reaction evidence="1">
        <text>O-phospho-L-seryl-[protein] + H2O = L-seryl-[protein] + phosphate</text>
        <dbReference type="Rhea" id="RHEA:20629"/>
        <dbReference type="Rhea" id="RHEA-COMP:9863"/>
        <dbReference type="Rhea" id="RHEA-COMP:11604"/>
        <dbReference type="ChEBI" id="CHEBI:15377"/>
        <dbReference type="ChEBI" id="CHEBI:29999"/>
        <dbReference type="ChEBI" id="CHEBI:43474"/>
        <dbReference type="ChEBI" id="CHEBI:83421"/>
        <dbReference type="EC" id="3.1.3.16"/>
    </reaction>
    <physiologicalReaction direction="left-to-right" evidence="1">
        <dbReference type="Rhea" id="RHEA:20630"/>
    </physiologicalReaction>
</comment>
<comment type="catalytic activity">
    <reaction evidence="1">
        <text>O-phospho-L-threonyl-[protein] + H2O = L-threonyl-[protein] + phosphate</text>
        <dbReference type="Rhea" id="RHEA:47004"/>
        <dbReference type="Rhea" id="RHEA-COMP:11060"/>
        <dbReference type="Rhea" id="RHEA-COMP:11605"/>
        <dbReference type="ChEBI" id="CHEBI:15377"/>
        <dbReference type="ChEBI" id="CHEBI:30013"/>
        <dbReference type="ChEBI" id="CHEBI:43474"/>
        <dbReference type="ChEBI" id="CHEBI:61977"/>
        <dbReference type="EC" id="3.1.3.16"/>
    </reaction>
    <physiologicalReaction direction="left-to-right" evidence="1">
        <dbReference type="Rhea" id="RHEA:47005"/>
    </physiologicalReaction>
</comment>
<comment type="catalytic activity">
    <reaction evidence="1">
        <text>O-phospho-L-tyrosyl-[protein] + H2O = L-tyrosyl-[protein] + phosphate</text>
        <dbReference type="Rhea" id="RHEA:10684"/>
        <dbReference type="Rhea" id="RHEA-COMP:10136"/>
        <dbReference type="Rhea" id="RHEA-COMP:20101"/>
        <dbReference type="ChEBI" id="CHEBI:15377"/>
        <dbReference type="ChEBI" id="CHEBI:43474"/>
        <dbReference type="ChEBI" id="CHEBI:46858"/>
        <dbReference type="ChEBI" id="CHEBI:61978"/>
        <dbReference type="EC" id="3.1.3.48"/>
    </reaction>
    <physiologicalReaction direction="left-to-right" evidence="1">
        <dbReference type="Rhea" id="RHEA:10685"/>
    </physiologicalReaction>
</comment>
<comment type="catalytic activity">
    <reaction evidence="1">
        <text>1,2-dioctanoyl-sn-glycero-3-phospho-(1D-myo-inositol-3,4,5-trisphosphate) + H2O = 1,2-dioctanoyl-sn-glycero-3-phospho-(1D-myo-inositol-4,5-bisphosphate) + phosphate</text>
        <dbReference type="Rhea" id="RHEA:43552"/>
        <dbReference type="ChEBI" id="CHEBI:15377"/>
        <dbReference type="ChEBI" id="CHEBI:43474"/>
        <dbReference type="ChEBI" id="CHEBI:83416"/>
        <dbReference type="ChEBI" id="CHEBI:83419"/>
    </reaction>
    <physiologicalReaction direction="left-to-right" evidence="1">
        <dbReference type="Rhea" id="RHEA:43553"/>
    </physiologicalReaction>
</comment>
<comment type="catalytic activity">
    <reaction evidence="1">
        <text>1,2-dihexadecanoyl-sn-glycero-3-phospho-(1D-myo-inositol-3,4,5-trisphosphate) + H2O = 1,2-dihexadecanoyl-sn-glycero-3-phospho-(1D-myo-inositol-4,5-bisphosphate) + phosphate</text>
        <dbReference type="Rhea" id="RHEA:43560"/>
        <dbReference type="ChEBI" id="CHEBI:15377"/>
        <dbReference type="ChEBI" id="CHEBI:43474"/>
        <dbReference type="ChEBI" id="CHEBI:83420"/>
        <dbReference type="ChEBI" id="CHEBI:83423"/>
    </reaction>
    <physiologicalReaction direction="left-to-right" evidence="1">
        <dbReference type="Rhea" id="RHEA:43561"/>
    </physiologicalReaction>
</comment>
<comment type="catalytic activity">
    <reaction evidence="1">
        <text>1D-myo-inositol 1,3,4,5,6-pentakisphosphate + H2O = 1D-myo-inositol 1,4,5,6-tetrakisphosphate + phosphate</text>
        <dbReference type="Rhea" id="RHEA:77143"/>
        <dbReference type="ChEBI" id="CHEBI:15377"/>
        <dbReference type="ChEBI" id="CHEBI:43474"/>
        <dbReference type="ChEBI" id="CHEBI:57627"/>
        <dbReference type="ChEBI" id="CHEBI:57733"/>
    </reaction>
    <physiologicalReaction direction="left-to-right" evidence="1">
        <dbReference type="Rhea" id="RHEA:77144"/>
    </physiologicalReaction>
</comment>
<comment type="catalytic activity">
    <reaction evidence="1">
        <text>1D-myo-inositol 1,3,4,5-tetrakisphosphate + H2O = 1D-myo-inositol 1,4,5-trisphosphate + phosphate</text>
        <dbReference type="Rhea" id="RHEA:77155"/>
        <dbReference type="ChEBI" id="CHEBI:15377"/>
        <dbReference type="ChEBI" id="CHEBI:43474"/>
        <dbReference type="ChEBI" id="CHEBI:57895"/>
        <dbReference type="ChEBI" id="CHEBI:203600"/>
    </reaction>
    <physiologicalReaction direction="left-to-right" evidence="1">
        <dbReference type="Rhea" id="RHEA:77156"/>
    </physiologicalReaction>
</comment>
<comment type="subcellular location">
    <subcellularLocation>
        <location>Cell membrane</location>
        <topology>Peripheral membrane protein</topology>
        <orientation>Cytoplasmic side</orientation>
    </subcellularLocation>
    <subcellularLocation>
        <location>Cytoplasm</location>
    </subcellularLocation>
    <subcellularLocation>
        <location>Cytoplasm</location>
        <location>Cell cortex</location>
    </subcellularLocation>
    <text>Found uniformly on the plasma membrane in unstimulated cells. In response to chemoattractant stimulation, there is a rapid and transient release from the plasma membrane. Constitutively localized in the cortex of polarized cells.</text>
</comment>
<comment type="developmental stage">
    <text evidence="7">In chemotaxing cells, is on the plasma membrane along the lateral sides and posterior of the cell but is absent or the level is significantly reduced at the leading edge.</text>
</comment>
<comment type="disruption phenotype">
    <text evidence="6 7 9 10 12">Growth defect. Failure to aggregate. Slower migration. Leads to increased F-actin polymerization. Unable to suppress lateral pseudopod formation and turning. Having a direct on PI(3,4,5)P3/PI(3,4)P2 levels. Significant increase in chemoattractant-mediated activation of pkbA and a decrease in chemotaxis speed.</text>
</comment>
<comment type="similarity">
    <text evidence="13">Belongs to the PTEN phosphatase protein family.</text>
</comment>
<accession>Q8T9S7</accession>
<accession>Q54LI5</accession>
<accession>Q8T658</accession>
<feature type="chain" id="PRO_0000376825" description="Phosphatidylinositol 3,4,5-trisphosphate 3-phosphatase and dual-specificity protein phosphatase PTEN">
    <location>
        <begin position="1"/>
        <end position="533"/>
    </location>
</feature>
<feature type="domain" description="Phosphatase tensin-type" evidence="3">
    <location>
        <begin position="14"/>
        <end position="185"/>
    </location>
</feature>
<feature type="domain" description="C2 tensin-type" evidence="2">
    <location>
        <begin position="271"/>
        <end position="406"/>
    </location>
</feature>
<feature type="region of interest" description="Disordered" evidence="5">
    <location>
        <begin position="235"/>
        <end position="298"/>
    </location>
</feature>
<feature type="region of interest" description="Disordered" evidence="5">
    <location>
        <begin position="410"/>
        <end position="533"/>
    </location>
</feature>
<feature type="compositionally biased region" description="Low complexity" evidence="5">
    <location>
        <begin position="265"/>
        <end position="298"/>
    </location>
</feature>
<feature type="compositionally biased region" description="Polar residues" evidence="5">
    <location>
        <begin position="410"/>
        <end position="439"/>
    </location>
</feature>
<feature type="compositionally biased region" description="Low complexity" evidence="5">
    <location>
        <begin position="455"/>
        <end position="478"/>
    </location>
</feature>
<feature type="compositionally biased region" description="Polar residues" evidence="5">
    <location>
        <begin position="479"/>
        <end position="505"/>
    </location>
</feature>
<feature type="compositionally biased region" description="Low complexity" evidence="5">
    <location>
        <begin position="517"/>
        <end position="533"/>
    </location>
</feature>
<feature type="active site" description="Phosphocysteine intermediate" evidence="3 4">
    <location>
        <position position="124"/>
    </location>
</feature>
<feature type="sequence conflict" description="In Ref. 2; AAL99958." evidence="13" ref="2">
    <original>I</original>
    <variation>N</variation>
    <location>
        <position position="515"/>
    </location>
</feature>
<name>PTEN_DICDI</name>
<gene>
    <name type="primary">pteN</name>
    <name type="synonym">ptenA</name>
    <name type="ORF">DDB_G0286557</name>
</gene>
<keyword id="KW-0131">Cell cycle</keyword>
<keyword id="KW-1003">Cell membrane</keyword>
<keyword id="KW-0145">Chemotaxis</keyword>
<keyword id="KW-0963">Cytoplasm</keyword>
<keyword id="KW-0378">Hydrolase</keyword>
<keyword id="KW-0443">Lipid metabolism</keyword>
<keyword id="KW-0446">Lipid-binding</keyword>
<keyword id="KW-0472">Membrane</keyword>
<keyword id="KW-0904">Protein phosphatase</keyword>
<keyword id="KW-1185">Reference proteome</keyword>